<dbReference type="EMBL" id="AF265221">
    <property type="protein sequence ID" value="AAG17639.1"/>
    <property type="molecule type" value="mRNA"/>
</dbReference>
<dbReference type="EMBL" id="BC148892">
    <property type="protein sequence ID" value="AAI48893.1"/>
    <property type="molecule type" value="mRNA"/>
</dbReference>
<dbReference type="RefSeq" id="NP_776535.1">
    <property type="nucleotide sequence ID" value="NM_174110.1"/>
</dbReference>
<dbReference type="SMR" id="Q9GLJ8"/>
<dbReference type="FunCoup" id="Q9GLJ8">
    <property type="interactions" value="170"/>
</dbReference>
<dbReference type="STRING" id="9913.ENSBTAP00000026223"/>
<dbReference type="GlyCosmos" id="Q9GLJ8">
    <property type="glycosylation" value="3 sites, No reported glycans"/>
</dbReference>
<dbReference type="GlyGen" id="Q9GLJ8">
    <property type="glycosylation" value="3 sites"/>
</dbReference>
<dbReference type="PaxDb" id="9913-ENSBTAP00000026223"/>
<dbReference type="Ensembl" id="ENSBTAT00000026223.5">
    <property type="protein sequence ID" value="ENSBTAP00000026223.4"/>
    <property type="gene ID" value="ENSBTAG00000019676.5"/>
</dbReference>
<dbReference type="GeneID" id="281300"/>
<dbReference type="KEGG" id="bta:281300"/>
<dbReference type="CTD" id="4160"/>
<dbReference type="VEuPathDB" id="HostDB:ENSBTAG00000019676"/>
<dbReference type="VGNC" id="VGNC:31295">
    <property type="gene designation" value="MC4R"/>
</dbReference>
<dbReference type="eggNOG" id="KOG3656">
    <property type="taxonomic scope" value="Eukaryota"/>
</dbReference>
<dbReference type="GeneTree" id="ENSGT01120000271819"/>
<dbReference type="HOGENOM" id="CLU_009579_13_0_1"/>
<dbReference type="InParanoid" id="Q9GLJ8"/>
<dbReference type="OMA" id="FYISCPH"/>
<dbReference type="OrthoDB" id="5970330at2759"/>
<dbReference type="TreeFam" id="TF332646"/>
<dbReference type="Reactome" id="R-BTA-375276">
    <property type="pathway name" value="Peptide ligand-binding receptors"/>
</dbReference>
<dbReference type="Reactome" id="R-BTA-418555">
    <property type="pathway name" value="G alpha (s) signalling events"/>
</dbReference>
<dbReference type="Proteomes" id="UP000009136">
    <property type="component" value="Chromosome 24"/>
</dbReference>
<dbReference type="Bgee" id="ENSBTAG00000019676">
    <property type="expression patterns" value="Expressed in occipital lobe and 17 other cell types or tissues"/>
</dbReference>
<dbReference type="GO" id="GO:0005737">
    <property type="term" value="C:cytoplasm"/>
    <property type="evidence" value="ECO:0000318"/>
    <property type="project" value="GO_Central"/>
</dbReference>
<dbReference type="GO" id="GO:0005886">
    <property type="term" value="C:plasma membrane"/>
    <property type="evidence" value="ECO:0000318"/>
    <property type="project" value="GO_Central"/>
</dbReference>
<dbReference type="GO" id="GO:0004980">
    <property type="term" value="F:melanocyte-stimulating hormone receptor activity"/>
    <property type="evidence" value="ECO:0000318"/>
    <property type="project" value="GO_Central"/>
</dbReference>
<dbReference type="GO" id="GO:0042923">
    <property type="term" value="F:neuropeptide binding"/>
    <property type="evidence" value="ECO:0007669"/>
    <property type="project" value="Ensembl"/>
</dbReference>
<dbReference type="GO" id="GO:0031625">
    <property type="term" value="F:ubiquitin protein ligase binding"/>
    <property type="evidence" value="ECO:0007669"/>
    <property type="project" value="Ensembl"/>
</dbReference>
<dbReference type="GO" id="GO:0007189">
    <property type="term" value="P:adenylate cyclase-activating G protein-coupled receptor signaling pathway"/>
    <property type="evidence" value="ECO:0000318"/>
    <property type="project" value="GO_Central"/>
</dbReference>
<dbReference type="GO" id="GO:0007631">
    <property type="term" value="P:feeding behavior"/>
    <property type="evidence" value="ECO:0007669"/>
    <property type="project" value="Ensembl"/>
</dbReference>
<dbReference type="GO" id="GO:0030073">
    <property type="term" value="P:insulin secretion"/>
    <property type="evidence" value="ECO:0007669"/>
    <property type="project" value="Ensembl"/>
</dbReference>
<dbReference type="GO" id="GO:0045780">
    <property type="term" value="P:positive regulation of bone resorption"/>
    <property type="evidence" value="ECO:0007669"/>
    <property type="project" value="Ensembl"/>
</dbReference>
<dbReference type="GO" id="GO:1903998">
    <property type="term" value="P:regulation of eating behavior"/>
    <property type="evidence" value="ECO:0007669"/>
    <property type="project" value="Ensembl"/>
</dbReference>
<dbReference type="GO" id="GO:0019222">
    <property type="term" value="P:regulation of metabolic process"/>
    <property type="evidence" value="ECO:0000318"/>
    <property type="project" value="GO_Central"/>
</dbReference>
<dbReference type="GO" id="GO:0032094">
    <property type="term" value="P:response to food"/>
    <property type="evidence" value="ECO:0007669"/>
    <property type="project" value="Ensembl"/>
</dbReference>
<dbReference type="GO" id="GO:0032868">
    <property type="term" value="P:response to insulin"/>
    <property type="evidence" value="ECO:0007669"/>
    <property type="project" value="Ensembl"/>
</dbReference>
<dbReference type="GO" id="GO:1990680">
    <property type="term" value="P:response to melanocyte-stimulating hormone"/>
    <property type="evidence" value="ECO:0007669"/>
    <property type="project" value="Ensembl"/>
</dbReference>
<dbReference type="CDD" id="cd15353">
    <property type="entry name" value="7tmA_MC4R"/>
    <property type="match status" value="1"/>
</dbReference>
<dbReference type="FunFam" id="1.20.1070.10:FF:000077">
    <property type="entry name" value="Melanocortin receptor 4"/>
    <property type="match status" value="1"/>
</dbReference>
<dbReference type="Gene3D" id="1.20.1070.10">
    <property type="entry name" value="Rhodopsin 7-helix transmembrane proteins"/>
    <property type="match status" value="1"/>
</dbReference>
<dbReference type="InterPro" id="IPR000276">
    <property type="entry name" value="GPCR_Rhodpsn"/>
</dbReference>
<dbReference type="InterPro" id="IPR017452">
    <property type="entry name" value="GPCR_Rhodpsn_7TM"/>
</dbReference>
<dbReference type="InterPro" id="IPR001908">
    <property type="entry name" value="MC3-5R"/>
</dbReference>
<dbReference type="InterPro" id="IPR000155">
    <property type="entry name" value="Mcort_rcpt_4"/>
</dbReference>
<dbReference type="InterPro" id="IPR001671">
    <property type="entry name" value="Melcrt_ACTH_rcpt"/>
</dbReference>
<dbReference type="PANTHER" id="PTHR22750">
    <property type="entry name" value="G-PROTEIN COUPLED RECEPTOR"/>
    <property type="match status" value="1"/>
</dbReference>
<dbReference type="Pfam" id="PF00001">
    <property type="entry name" value="7tm_1"/>
    <property type="match status" value="1"/>
</dbReference>
<dbReference type="PRINTS" id="PR00237">
    <property type="entry name" value="GPCRRHODOPSN"/>
</dbReference>
<dbReference type="PRINTS" id="PR00534">
    <property type="entry name" value="MCRFAMILY"/>
</dbReference>
<dbReference type="PRINTS" id="PR00535">
    <property type="entry name" value="MELNOCORTINR"/>
</dbReference>
<dbReference type="PRINTS" id="PR01062">
    <property type="entry name" value="MELNOCORTN4R"/>
</dbReference>
<dbReference type="SMART" id="SM01381">
    <property type="entry name" value="7TM_GPCR_Srsx"/>
    <property type="match status" value="1"/>
</dbReference>
<dbReference type="SUPFAM" id="SSF81321">
    <property type="entry name" value="Family A G protein-coupled receptor-like"/>
    <property type="match status" value="1"/>
</dbReference>
<dbReference type="PROSITE" id="PS00237">
    <property type="entry name" value="G_PROTEIN_RECEP_F1_1"/>
    <property type="match status" value="1"/>
</dbReference>
<dbReference type="PROSITE" id="PS50262">
    <property type="entry name" value="G_PROTEIN_RECEP_F1_2"/>
    <property type="match status" value="1"/>
</dbReference>
<name>MC4R_BOVIN</name>
<accession>Q9GLJ8</accession>
<accession>A6QNL9</accession>
<feature type="chain" id="PRO_0000069721" description="Melanocortin receptor 4">
    <location>
        <begin position="1"/>
        <end position="332"/>
    </location>
</feature>
<feature type="topological domain" description="Extracellular" evidence="4">
    <location>
        <begin position="1"/>
        <end position="43"/>
    </location>
</feature>
<feature type="transmembrane region" description="Helical; Name=1" evidence="4">
    <location>
        <begin position="44"/>
        <end position="69"/>
    </location>
</feature>
<feature type="topological domain" description="Cytoplasmic" evidence="4">
    <location>
        <begin position="70"/>
        <end position="81"/>
    </location>
</feature>
<feature type="transmembrane region" description="Helical; Name=2" evidence="4">
    <location>
        <begin position="82"/>
        <end position="106"/>
    </location>
</feature>
<feature type="topological domain" description="Extracellular" evidence="4">
    <location>
        <begin position="107"/>
        <end position="123"/>
    </location>
</feature>
<feature type="transmembrane region" description="Helical; Name=3" evidence="4">
    <location>
        <begin position="124"/>
        <end position="145"/>
    </location>
</feature>
<feature type="topological domain" description="Cytoplasmic" evidence="4">
    <location>
        <begin position="146"/>
        <end position="165"/>
    </location>
</feature>
<feature type="transmembrane region" description="Helical; Name=4" evidence="4">
    <location>
        <begin position="166"/>
        <end position="186"/>
    </location>
</feature>
<feature type="topological domain" description="Extracellular" evidence="4">
    <location>
        <begin position="187"/>
        <end position="191"/>
    </location>
</feature>
<feature type="transmembrane region" description="Helical; Name=5" evidence="4">
    <location>
        <begin position="192"/>
        <end position="215"/>
    </location>
</feature>
<feature type="topological domain" description="Cytoplasmic" evidence="4">
    <location>
        <begin position="216"/>
        <end position="248"/>
    </location>
</feature>
<feature type="transmembrane region" description="Helical; Name=6" evidence="4">
    <location>
        <begin position="249"/>
        <end position="271"/>
    </location>
</feature>
<feature type="topological domain" description="Extracellular" evidence="4">
    <location>
        <begin position="272"/>
        <end position="280"/>
    </location>
</feature>
<feature type="transmembrane region" description="Helical; Name=7" evidence="4">
    <location>
        <begin position="281"/>
        <end position="304"/>
    </location>
</feature>
<feature type="topological domain" description="Cytoplasmic" evidence="4">
    <location>
        <begin position="305"/>
        <end position="332"/>
    </location>
</feature>
<feature type="binding site" evidence="2">
    <location>
        <position position="100"/>
    </location>
    <ligand>
        <name>Ca(2+)</name>
        <dbReference type="ChEBI" id="CHEBI:29108"/>
    </ligand>
</feature>
<feature type="binding site" evidence="2">
    <location>
        <position position="122"/>
    </location>
    <ligand>
        <name>Ca(2+)</name>
        <dbReference type="ChEBI" id="CHEBI:29108"/>
    </ligand>
</feature>
<feature type="binding site" evidence="2">
    <location>
        <position position="126"/>
    </location>
    <ligand>
        <name>Ca(2+)</name>
        <dbReference type="ChEBI" id="CHEBI:29108"/>
    </ligand>
</feature>
<feature type="lipid moiety-binding region" description="S-palmitoyl cysteine" evidence="4">
    <location>
        <position position="318"/>
    </location>
</feature>
<feature type="glycosylation site" description="N-linked (GlcNAc...) asparagine" evidence="4">
    <location>
        <position position="2"/>
    </location>
</feature>
<feature type="glycosylation site" description="N-linked (GlcNAc...) asparagine" evidence="4">
    <location>
        <position position="17"/>
    </location>
</feature>
<feature type="glycosylation site" description="N-linked (GlcNAc...) asparagine" evidence="4">
    <location>
        <position position="26"/>
    </location>
</feature>
<feature type="disulfide bond" evidence="2">
    <location>
        <begin position="40"/>
        <end position="279"/>
    </location>
</feature>
<feature type="disulfide bond" description="Interchain" evidence="5">
    <location>
        <position position="84"/>
    </location>
</feature>
<feature type="disulfide bond" evidence="2">
    <location>
        <begin position="271"/>
        <end position="277"/>
    </location>
</feature>
<feature type="sequence variant" evidence="6">
    <original>V</original>
    <variation>A</variation>
    <location>
        <position position="145"/>
    </location>
</feature>
<feature type="sequence variant" evidence="6">
    <original>A</original>
    <variation>T</variation>
    <location>
        <position position="172"/>
    </location>
</feature>
<reference key="1">
    <citation type="journal article" date="2001" name="Anim. Genet.">
        <title>Bovine melanocortin receptor 4: cDNA sequence, polymorphisms and mapping.</title>
        <authorList>
            <person name="Haegeman A."/>
            <person name="Coopman F."/>
            <person name="Jacobs K."/>
            <person name="Mattheeuws M."/>
            <person name="Van Zeveren A."/>
            <person name="Peelman L.J."/>
        </authorList>
    </citation>
    <scope>NUCLEOTIDE SEQUENCE [MRNA]</scope>
    <scope>VARIANTS ALA-145 AND THR-172</scope>
    <source>
        <strain>Holstein</strain>
    </source>
</reference>
<reference key="2">
    <citation type="submission" date="2007-07" db="EMBL/GenBank/DDBJ databases">
        <authorList>
            <consortium name="NIH - Mammalian Gene Collection (MGC) project"/>
        </authorList>
    </citation>
    <scope>NUCLEOTIDE SEQUENCE [LARGE SCALE MRNA]</scope>
    <source>
        <strain>Hereford</strain>
        <tissue>Hypothalamus</tissue>
    </source>
</reference>
<evidence type="ECO:0000250" key="1"/>
<evidence type="ECO:0000250" key="2">
    <source>
        <dbReference type="UniProtKB" id="P32245"/>
    </source>
</evidence>
<evidence type="ECO:0000250" key="3">
    <source>
        <dbReference type="UniProtKB" id="P56450"/>
    </source>
</evidence>
<evidence type="ECO:0000255" key="4"/>
<evidence type="ECO:0000255" key="5">
    <source>
        <dbReference type="PROSITE-ProRule" id="PRU00521"/>
    </source>
</evidence>
<evidence type="ECO:0000269" key="6">
    <source>
    </source>
</evidence>
<proteinExistence type="evidence at transcript level"/>
<gene>
    <name type="primary">MC4R</name>
</gene>
<sequence length="332" mass="36620">MNSTQPLGMHTSLHSWNRSAHGMPTNVSESLAKGYSDGGCYEQLFVSPEVFVTLGVISLLENILVIVAIAKNKNLHSPMYFFICSLAVADMLVSVSNGSETIVITLLNSTDTDAQSFTVDIDNVIDSVICSSLLASICSLLSIAVDRYFTIFYALQYHNIMTVKRVAITISAIWAACTVSGVLFIIYSDSSAVIICLITVFFTMLALMASLYVHMFLMARLHIKRIAVLPGSGTIRQGANMKGAITLTILIGVFVVCWAPFFLHLIFYISCPQNPYCVCFMSHFNLYLILIMCNSIIDPLIYALRSQELRKTFKEIICCSPLGGLCDLSSRY</sequence>
<comment type="function">
    <text evidence="2 3">Hormone receptor that acts as a key component of the leptin-melanocortin pathway at the intersection of homeostatic maintenance of energetic state. Plays a role in regulating food intake: activation by a stimulating hormone such as anorexigenic alpha-melanocyte stimulating hormone (alpha-MSH) inhibits appetite, whereas binding to a natural antagonist like Agouti-related protein/AGRP promotes appetite. G-protein-coupled receptor that activates conventional Galphas signaling leading to induction of anorexogenic signaling in the hypothalamus to result in negative energy balance (By similarity). Regulates the firing activity of neurons from the hypothalamus by alpha-MSH and AGRP independently of Galphas signaling by ligand-induced coupling of closure of inwardly rectifying potassium channel KCNJ13 (By similarity). In intestinal epithelial cells, plays a role in the inhibition of hepatic glucose production via nesfatin-1/NUCB2 leading to increased cyclic adenosine monophosphate (cAMP) levels and glucagon-like peptide 1 (GLP-1) secretion in the intestinal epithelium (By similarity).</text>
</comment>
<comment type="subunit">
    <text evidence="1 2">Homodimer; disulfide-linked, also forms higher order oligomers. Interacts with GNAS (By similarity). Interacts with ATRNL1 (By similarity). Interacts with MGRN1; this interaction competes with GNAS-binding and thus inhibits agonist-induced cAMP production. Interacts with MRAP and MRAP2; these associated factors increase ligand-sensitivity and generation of cAMP (By similarity).</text>
</comment>
<comment type="subcellular location">
    <subcellularLocation>
        <location evidence="2">Cell membrane</location>
        <topology evidence="4">Multi-pass membrane protein</topology>
    </subcellularLocation>
</comment>
<comment type="similarity">
    <text evidence="5">Belongs to the G-protein coupled receptor 1 family.</text>
</comment>
<organism>
    <name type="scientific">Bos taurus</name>
    <name type="common">Bovine</name>
    <dbReference type="NCBI Taxonomy" id="9913"/>
    <lineage>
        <taxon>Eukaryota</taxon>
        <taxon>Metazoa</taxon>
        <taxon>Chordata</taxon>
        <taxon>Craniata</taxon>
        <taxon>Vertebrata</taxon>
        <taxon>Euteleostomi</taxon>
        <taxon>Mammalia</taxon>
        <taxon>Eutheria</taxon>
        <taxon>Laurasiatheria</taxon>
        <taxon>Artiodactyla</taxon>
        <taxon>Ruminantia</taxon>
        <taxon>Pecora</taxon>
        <taxon>Bovidae</taxon>
        <taxon>Bovinae</taxon>
        <taxon>Bos</taxon>
    </lineage>
</organism>
<protein>
    <recommendedName>
        <fullName>Melanocortin receptor 4</fullName>
        <shortName>MC4-R</shortName>
    </recommendedName>
</protein>
<keyword id="KW-0106">Calcium</keyword>
<keyword id="KW-1003">Cell membrane</keyword>
<keyword id="KW-1015">Disulfide bond</keyword>
<keyword id="KW-0297">G-protein coupled receptor</keyword>
<keyword id="KW-0325">Glycoprotein</keyword>
<keyword id="KW-0449">Lipoprotein</keyword>
<keyword id="KW-0472">Membrane</keyword>
<keyword id="KW-0479">Metal-binding</keyword>
<keyword id="KW-0564">Palmitate</keyword>
<keyword id="KW-0675">Receptor</keyword>
<keyword id="KW-1185">Reference proteome</keyword>
<keyword id="KW-0807">Transducer</keyword>
<keyword id="KW-0812">Transmembrane</keyword>
<keyword id="KW-1133">Transmembrane helix</keyword>